<organism>
    <name type="scientific">Brevibacillus brevis (strain 47 / JCM 6285 / NBRC 100599)</name>
    <dbReference type="NCBI Taxonomy" id="358681"/>
    <lineage>
        <taxon>Bacteria</taxon>
        <taxon>Bacillati</taxon>
        <taxon>Bacillota</taxon>
        <taxon>Bacilli</taxon>
        <taxon>Bacillales</taxon>
        <taxon>Paenibacillaceae</taxon>
        <taxon>Brevibacillus</taxon>
    </lineage>
</organism>
<gene>
    <name evidence="1" type="primary">lipM</name>
    <name type="synonym">yqhM</name>
    <name type="ordered locus">BBR47_23010</name>
</gene>
<accession>C0ZBW9</accession>
<protein>
    <recommendedName>
        <fullName evidence="1">Octanoyltransferase LipM</fullName>
        <ecNumber evidence="1">2.3.1.181</ecNumber>
    </recommendedName>
    <alternativeName>
        <fullName evidence="1">Octanoyl-[acyl-carrier-protein]:[GcvH] N-octanoyltransferase</fullName>
    </alternativeName>
</protein>
<proteinExistence type="inferred from homology"/>
<evidence type="ECO:0000255" key="1">
    <source>
        <dbReference type="HAMAP-Rule" id="MF_02118"/>
    </source>
</evidence>
<evidence type="ECO:0000255" key="2">
    <source>
        <dbReference type="PROSITE-ProRule" id="PRU01067"/>
    </source>
</evidence>
<sequence length="276" mass="30946">MEQWRYIVTEAMSPAMNMAVDEAILQLHSEGKVPPTVRFYTWDPATLSIGYFQKAIKEINLEEVQNRGLGFVRRATGGRAVLHDQELTYSVIVSEDHPKMPSSVTEAYKIISLGLLHGFQNLGLSAEMVSLASEEEKEKYNSPGSSACFDSPSWYELVVEGKKVAGSAQTRQKGVILQHGSILLDMDVDLLFSLLHFPSERVKQRMIDSFRQKAVTINEVSSRPISLQESIEAFSKGFASGLEVELTPSTLTDEELALAEELVRTRYATDEWNLRR</sequence>
<comment type="function">
    <text evidence="1">Catalyzes the transfer of endogenously produced octanoic acid from octanoyl-acyl-carrier-protein onto the lipoyl domain of GcvH, an intermediate carrier during protein lipoylation.</text>
</comment>
<comment type="catalytic activity">
    <reaction evidence="1">
        <text>octanoyl-[ACP] + L-lysyl-[protein] = N(6)-octanoyl-L-lysyl-[protein] + holo-[ACP] + H(+)</text>
        <dbReference type="Rhea" id="RHEA:17665"/>
        <dbReference type="Rhea" id="RHEA-COMP:9636"/>
        <dbReference type="Rhea" id="RHEA-COMP:9685"/>
        <dbReference type="Rhea" id="RHEA-COMP:9752"/>
        <dbReference type="Rhea" id="RHEA-COMP:9928"/>
        <dbReference type="ChEBI" id="CHEBI:15378"/>
        <dbReference type="ChEBI" id="CHEBI:29969"/>
        <dbReference type="ChEBI" id="CHEBI:64479"/>
        <dbReference type="ChEBI" id="CHEBI:78463"/>
        <dbReference type="ChEBI" id="CHEBI:78809"/>
        <dbReference type="EC" id="2.3.1.181"/>
    </reaction>
</comment>
<comment type="pathway">
    <text evidence="1">Protein modification; protein lipoylation via endogenous pathway; protein N(6)-(lipoyl)lysine from octanoyl-[acyl-carrier-protein].</text>
</comment>
<comment type="subunit">
    <text evidence="1">Monomer.</text>
</comment>
<comment type="miscellaneous">
    <text evidence="1">In the reaction, the free carboxyl group of octanoic acid is attached via an amide linkage to the epsilon-amino group of a specific lysine residue of lipoyl domains of lipoate-dependent enzymes. The reaction proceeds via an octanoyl-thioester enzyme intermediate.</text>
</comment>
<comment type="similarity">
    <text evidence="1">Belongs to the octanoyltransferase LipM family.</text>
</comment>
<name>LIPM_BREBN</name>
<feature type="chain" id="PRO_0000410853" description="Octanoyltransferase LipM">
    <location>
        <begin position="1"/>
        <end position="276"/>
    </location>
</feature>
<feature type="domain" description="BPL/LPL catalytic" evidence="2">
    <location>
        <begin position="31"/>
        <end position="246"/>
    </location>
</feature>
<feature type="active site" description="Acyl-thioester intermediate" evidence="1">
    <location>
        <position position="148"/>
    </location>
</feature>
<feature type="site" description="Lowers pKa of active site Cys" evidence="1">
    <location>
        <position position="163"/>
    </location>
</feature>
<dbReference type="EC" id="2.3.1.181" evidence="1"/>
<dbReference type="EMBL" id="AP008955">
    <property type="protein sequence ID" value="BAH43278.1"/>
    <property type="molecule type" value="Genomic_DNA"/>
</dbReference>
<dbReference type="RefSeq" id="WP_012685999.1">
    <property type="nucleotide sequence ID" value="NC_012491.1"/>
</dbReference>
<dbReference type="SMR" id="C0ZBW9"/>
<dbReference type="STRING" id="358681.BBR47_23010"/>
<dbReference type="KEGG" id="bbe:BBR47_23010"/>
<dbReference type="eggNOG" id="COG0095">
    <property type="taxonomic scope" value="Bacteria"/>
</dbReference>
<dbReference type="HOGENOM" id="CLU_022986_5_0_9"/>
<dbReference type="Proteomes" id="UP000001877">
    <property type="component" value="Chromosome"/>
</dbReference>
<dbReference type="GO" id="GO:0033819">
    <property type="term" value="F:lipoyl(octanoyl) transferase activity"/>
    <property type="evidence" value="ECO:0007669"/>
    <property type="project" value="UniProtKB-UniRule"/>
</dbReference>
<dbReference type="GO" id="GO:0009107">
    <property type="term" value="P:lipoate biosynthetic process"/>
    <property type="evidence" value="ECO:0007669"/>
    <property type="project" value="UniProtKB-UniRule"/>
</dbReference>
<dbReference type="GO" id="GO:0036211">
    <property type="term" value="P:protein modification process"/>
    <property type="evidence" value="ECO:0007669"/>
    <property type="project" value="InterPro"/>
</dbReference>
<dbReference type="CDD" id="cd16443">
    <property type="entry name" value="LplA"/>
    <property type="match status" value="1"/>
</dbReference>
<dbReference type="Gene3D" id="3.30.930.10">
    <property type="entry name" value="Bira Bifunctional Protein, Domain 2"/>
    <property type="match status" value="1"/>
</dbReference>
<dbReference type="HAMAP" id="MF_02118">
    <property type="entry name" value="LipM"/>
    <property type="match status" value="1"/>
</dbReference>
<dbReference type="InterPro" id="IPR045864">
    <property type="entry name" value="aa-tRNA-synth_II/BPL/LPL"/>
</dbReference>
<dbReference type="InterPro" id="IPR004143">
    <property type="entry name" value="BPL_LPL_catalytic"/>
</dbReference>
<dbReference type="InterPro" id="IPR024898">
    <property type="entry name" value="LipM"/>
</dbReference>
<dbReference type="InterPro" id="IPR050664">
    <property type="entry name" value="Octanoyltrans_LipM/LipL"/>
</dbReference>
<dbReference type="PANTHER" id="PTHR43679:SF2">
    <property type="entry name" value="OCTANOYL-[GCVH]:PROTEIN N-OCTANOYLTRANSFERASE"/>
    <property type="match status" value="1"/>
</dbReference>
<dbReference type="PANTHER" id="PTHR43679">
    <property type="entry name" value="OCTANOYLTRANSFERASE LIPM-RELATED"/>
    <property type="match status" value="1"/>
</dbReference>
<dbReference type="Pfam" id="PF21948">
    <property type="entry name" value="LplA-B_cat"/>
    <property type="match status" value="1"/>
</dbReference>
<dbReference type="SUPFAM" id="SSF55681">
    <property type="entry name" value="Class II aaRS and biotin synthetases"/>
    <property type="match status" value="1"/>
</dbReference>
<dbReference type="PROSITE" id="PS51733">
    <property type="entry name" value="BPL_LPL_CATALYTIC"/>
    <property type="match status" value="1"/>
</dbReference>
<reference key="1">
    <citation type="submission" date="2005-03" db="EMBL/GenBank/DDBJ databases">
        <title>Brevibacillus brevis strain 47, complete genome.</title>
        <authorList>
            <person name="Hosoyama A."/>
            <person name="Yamada R."/>
            <person name="Hongo Y."/>
            <person name="Terui Y."/>
            <person name="Ankai A."/>
            <person name="Masuyama W."/>
            <person name="Sekiguchi M."/>
            <person name="Takeda T."/>
            <person name="Asano K."/>
            <person name="Ohji S."/>
            <person name="Ichikawa N."/>
            <person name="Narita S."/>
            <person name="Aoki N."/>
            <person name="Miura H."/>
            <person name="Matsushita S."/>
            <person name="Sekigawa T."/>
            <person name="Yamagata H."/>
            <person name="Yoshikawa H."/>
            <person name="Udaka S."/>
            <person name="Tanikawa S."/>
            <person name="Fujita N."/>
        </authorList>
    </citation>
    <scope>NUCLEOTIDE SEQUENCE [LARGE SCALE GENOMIC DNA]</scope>
    <source>
        <strain>47 / JCM 6285 / NBRC 100599</strain>
    </source>
</reference>
<keyword id="KW-0012">Acyltransferase</keyword>
<keyword id="KW-1185">Reference proteome</keyword>
<keyword id="KW-0808">Transferase</keyword>